<comment type="function">
    <text evidence="2 5 6">BrlA, abaA and wetA are pivotal regulators of conidiophore development and conidium maturation (By similarity). They act individually and together to regulate their own expression and that of numerous other sporulation-specific genes (By similarity). Binds promoters of target genes at brlA response elements (BREs) containing the conserved sequence 5'-(C/A)(A/G)AGGG(G/A)-3' (By similarity). Required for conidiophores formation (PubMed:17213655). Controls expression of abaA (PubMed:19850144).</text>
</comment>
<comment type="subcellular location">
    <subcellularLocation>
        <location evidence="1">Nucleus</location>
    </subcellularLocation>
</comment>
<comment type="induction">
    <text evidence="6">Expression is controlled by flbA, flbS and fluG (PubMed:19850144).</text>
</comment>
<comment type="disruption phenotype">
    <text evidence="5 6">Leads to delayed conidia development (PubMed:17213655, PubMed:19850144).</text>
</comment>
<accession>Q2UQZ5</accession>
<organism>
    <name type="scientific">Aspergillus oryzae (strain ATCC 42149 / RIB 40)</name>
    <name type="common">Yellow koji mold</name>
    <dbReference type="NCBI Taxonomy" id="510516"/>
    <lineage>
        <taxon>Eukaryota</taxon>
        <taxon>Fungi</taxon>
        <taxon>Dikarya</taxon>
        <taxon>Ascomycota</taxon>
        <taxon>Pezizomycotina</taxon>
        <taxon>Eurotiomycetes</taxon>
        <taxon>Eurotiomycetidae</taxon>
        <taxon>Eurotiales</taxon>
        <taxon>Aspergillaceae</taxon>
        <taxon>Aspergillus</taxon>
        <taxon>Aspergillus subgen. Circumdati</taxon>
    </lineage>
</organism>
<proteinExistence type="evidence at transcript level"/>
<feature type="chain" id="PRO_0000435943" description="C2H2 type master regulator of conidiophore development brlA">
    <location>
        <begin position="1"/>
        <end position="421"/>
    </location>
</feature>
<feature type="zinc finger region" description="C2H2-type 1" evidence="3">
    <location>
        <begin position="309"/>
        <end position="333"/>
    </location>
</feature>
<feature type="zinc finger region" description="C2H2-type 2" evidence="3">
    <location>
        <begin position="339"/>
        <end position="364"/>
    </location>
</feature>
<feature type="region of interest" description="Disordered" evidence="4">
    <location>
        <begin position="379"/>
        <end position="421"/>
    </location>
</feature>
<sequence length="421" mass="46826">MRTQNNLTVEVDCHSLGSNECPSMTSSFSPMDSPTPTPTSIYSQGSLASPGWQDAGSYPGHAYERHTGATPMRSAFRLAGMTSNENMGMSYGAMEAQERMPMPDFLSAYDDNVEHFWLPSDGPKTYETGTHSLPYPHTLPQCPPMVRSNYRPHAAYLPEAATNPCLSRSIFHHAERVPQSMSMGNMMPWIPQATESIAPQTIAPSQVGPVTPPPSYSEFPTSIQTFKTHSPTTPLRSCSIGTASGPDTPISRLSGGAADYLEDFQQSPPFRDGLNRLQRQPSRKMIRKQSSRQNMSLENLPSIIKQVQFKCKEPGCKGRFKRQEHLKRHMKSHSKEKPHVCWVPGCERAFSRSDNLNAHYTKTHSKRGGRNRYVATLDESSPDYDPDFRGQLTPDGLPIRGSTLDDPMPNSREYSVDGLDD</sequence>
<keyword id="KW-0010">Activator</keyword>
<keyword id="KW-0183">Conidiation</keyword>
<keyword id="KW-0238">DNA-binding</keyword>
<keyword id="KW-0479">Metal-binding</keyword>
<keyword id="KW-0539">Nucleus</keyword>
<keyword id="KW-1185">Reference proteome</keyword>
<keyword id="KW-0677">Repeat</keyword>
<keyword id="KW-0749">Sporulation</keyword>
<keyword id="KW-0804">Transcription</keyword>
<keyword id="KW-0805">Transcription regulation</keyword>
<keyword id="KW-0862">Zinc</keyword>
<keyword id="KW-0863">Zinc-finger</keyword>
<dbReference type="EMBL" id="BA000049">
    <property type="protein sequence ID" value="BAE56020.1"/>
    <property type="molecule type" value="Genomic_DNA"/>
</dbReference>
<dbReference type="RefSeq" id="XP_001818022.1">
    <property type="nucleotide sequence ID" value="XM_001817970.2"/>
</dbReference>
<dbReference type="SMR" id="Q2UQZ5"/>
<dbReference type="STRING" id="510516.Q2UQZ5"/>
<dbReference type="EnsemblFungi" id="BAE56020">
    <property type="protein sequence ID" value="BAE56020"/>
    <property type="gene ID" value="AO090005001041"/>
</dbReference>
<dbReference type="GeneID" id="5989967"/>
<dbReference type="KEGG" id="aor:AO090005001041"/>
<dbReference type="VEuPathDB" id="FungiDB:AO090005001041"/>
<dbReference type="HOGENOM" id="CLU_655506_0_0_1"/>
<dbReference type="OMA" id="WMPSHES"/>
<dbReference type="OrthoDB" id="17823at5052"/>
<dbReference type="Proteomes" id="UP000006564">
    <property type="component" value="Chromosome 1"/>
</dbReference>
<dbReference type="GO" id="GO:0000785">
    <property type="term" value="C:chromatin"/>
    <property type="evidence" value="ECO:0007669"/>
    <property type="project" value="TreeGrafter"/>
</dbReference>
<dbReference type="GO" id="GO:0005634">
    <property type="term" value="C:nucleus"/>
    <property type="evidence" value="ECO:0007669"/>
    <property type="project" value="UniProtKB-SubCell"/>
</dbReference>
<dbReference type="GO" id="GO:0005667">
    <property type="term" value="C:transcription regulator complex"/>
    <property type="evidence" value="ECO:0007669"/>
    <property type="project" value="TreeGrafter"/>
</dbReference>
<dbReference type="GO" id="GO:0000981">
    <property type="term" value="F:DNA-binding transcription factor activity, RNA polymerase II-specific"/>
    <property type="evidence" value="ECO:0007669"/>
    <property type="project" value="TreeGrafter"/>
</dbReference>
<dbReference type="GO" id="GO:0000978">
    <property type="term" value="F:RNA polymerase II cis-regulatory region sequence-specific DNA binding"/>
    <property type="evidence" value="ECO:0007669"/>
    <property type="project" value="TreeGrafter"/>
</dbReference>
<dbReference type="GO" id="GO:0008270">
    <property type="term" value="F:zinc ion binding"/>
    <property type="evidence" value="ECO:0007669"/>
    <property type="project" value="UniProtKB-KW"/>
</dbReference>
<dbReference type="GO" id="GO:0048315">
    <property type="term" value="P:conidium formation"/>
    <property type="evidence" value="ECO:0007669"/>
    <property type="project" value="UniProtKB-KW"/>
</dbReference>
<dbReference type="GO" id="GO:0030435">
    <property type="term" value="P:sporulation resulting in formation of a cellular spore"/>
    <property type="evidence" value="ECO:0007669"/>
    <property type="project" value="UniProtKB-KW"/>
</dbReference>
<dbReference type="FunFam" id="3.30.160.60:FF:000845">
    <property type="entry name" value="C2H2 type conidiation transcription factor BrlA"/>
    <property type="match status" value="1"/>
</dbReference>
<dbReference type="Gene3D" id="3.30.160.60">
    <property type="entry name" value="Classic Zinc Finger"/>
    <property type="match status" value="2"/>
</dbReference>
<dbReference type="InterPro" id="IPR036236">
    <property type="entry name" value="Znf_C2H2_sf"/>
</dbReference>
<dbReference type="InterPro" id="IPR013087">
    <property type="entry name" value="Znf_C2H2_type"/>
</dbReference>
<dbReference type="PANTHER" id="PTHR14003">
    <property type="entry name" value="TRANSCRIPTIONAL REPRESSOR PROTEIN YY"/>
    <property type="match status" value="1"/>
</dbReference>
<dbReference type="PANTHER" id="PTHR14003:SF19">
    <property type="entry name" value="YY2 TRANSCRIPTION FACTOR"/>
    <property type="match status" value="1"/>
</dbReference>
<dbReference type="Pfam" id="PF00096">
    <property type="entry name" value="zf-C2H2"/>
    <property type="match status" value="2"/>
</dbReference>
<dbReference type="SMART" id="SM00355">
    <property type="entry name" value="ZnF_C2H2"/>
    <property type="match status" value="2"/>
</dbReference>
<dbReference type="SUPFAM" id="SSF57667">
    <property type="entry name" value="beta-beta-alpha zinc fingers"/>
    <property type="match status" value="1"/>
</dbReference>
<dbReference type="PROSITE" id="PS00028">
    <property type="entry name" value="ZINC_FINGER_C2H2_1"/>
    <property type="match status" value="2"/>
</dbReference>
<dbReference type="PROSITE" id="PS50157">
    <property type="entry name" value="ZINC_FINGER_C2H2_2"/>
    <property type="match status" value="2"/>
</dbReference>
<reference key="1">
    <citation type="journal article" date="2005" name="Nature">
        <title>Genome sequencing and analysis of Aspergillus oryzae.</title>
        <authorList>
            <person name="Machida M."/>
            <person name="Asai K."/>
            <person name="Sano M."/>
            <person name="Tanaka T."/>
            <person name="Kumagai T."/>
            <person name="Terai G."/>
            <person name="Kusumoto K."/>
            <person name="Arima T."/>
            <person name="Akita O."/>
            <person name="Kashiwagi Y."/>
            <person name="Abe K."/>
            <person name="Gomi K."/>
            <person name="Horiuchi H."/>
            <person name="Kitamoto K."/>
            <person name="Kobayashi T."/>
            <person name="Takeuchi M."/>
            <person name="Denning D.W."/>
            <person name="Galagan J.E."/>
            <person name="Nierman W.C."/>
            <person name="Yu J."/>
            <person name="Archer D.B."/>
            <person name="Bennett J.W."/>
            <person name="Bhatnagar D."/>
            <person name="Cleveland T.E."/>
            <person name="Fedorova N.D."/>
            <person name="Gotoh O."/>
            <person name="Horikawa H."/>
            <person name="Hosoyama A."/>
            <person name="Ichinomiya M."/>
            <person name="Igarashi R."/>
            <person name="Iwashita K."/>
            <person name="Juvvadi P.R."/>
            <person name="Kato M."/>
            <person name="Kato Y."/>
            <person name="Kin T."/>
            <person name="Kokubun A."/>
            <person name="Maeda H."/>
            <person name="Maeyama N."/>
            <person name="Maruyama J."/>
            <person name="Nagasaki H."/>
            <person name="Nakajima T."/>
            <person name="Oda K."/>
            <person name="Okada K."/>
            <person name="Paulsen I."/>
            <person name="Sakamoto K."/>
            <person name="Sawano T."/>
            <person name="Takahashi M."/>
            <person name="Takase K."/>
            <person name="Terabayashi Y."/>
            <person name="Wortman J.R."/>
            <person name="Yamada O."/>
            <person name="Yamagata Y."/>
            <person name="Anazawa H."/>
            <person name="Hata Y."/>
            <person name="Koide Y."/>
            <person name="Komori T."/>
            <person name="Koyama Y."/>
            <person name="Minetoki T."/>
            <person name="Suharnan S."/>
            <person name="Tanaka A."/>
            <person name="Isono K."/>
            <person name="Kuhara S."/>
            <person name="Ogasawara N."/>
            <person name="Kikuchi H."/>
        </authorList>
    </citation>
    <scope>NUCLEOTIDE SEQUENCE [LARGE SCALE GENOMIC DNA]</scope>
    <source>
        <strain>ATCC 42149 / RIB 40</strain>
    </source>
</reference>
<reference key="2">
    <citation type="journal article" date="2007" name="Biosci. Biotechnol. Biochem.">
        <title>Gene silencing by RNA interference in the koji mold Aspergillus oryzae.</title>
        <authorList>
            <person name="Yamada O."/>
            <person name="Ikeda R."/>
            <person name="Ohkita Y."/>
            <person name="Hayashi R."/>
            <person name="Sakamoto K."/>
            <person name="Akita O."/>
        </authorList>
    </citation>
    <scope>DISRUPTION PHENOTYPE</scope>
    <scope>FUNCTION</scope>
</reference>
<reference key="3">
    <citation type="journal article" date="2010" name="Fungal Genet. Biol.">
        <title>Genetic analysis of conidiation regulatory pathways in koji-mold Aspergillus oryzae.</title>
        <authorList>
            <person name="Ogawa M."/>
            <person name="Tokuoka M."/>
            <person name="Jin F.J."/>
            <person name="Takahashi T."/>
            <person name="Koyama Y."/>
        </authorList>
    </citation>
    <scope>FUNCTION</scope>
    <scope>DISRUPTION PHENOTYPE</scope>
    <scope>INDUCTION</scope>
</reference>
<gene>
    <name evidence="7" type="primary">brlA</name>
    <name type="ORF">AO090005001041</name>
</gene>
<protein>
    <recommendedName>
        <fullName evidence="8">C2H2 type master regulator of conidiophore development brlA</fullName>
    </recommendedName>
</protein>
<evidence type="ECO:0000250" key="1">
    <source>
        <dbReference type="UniProtKB" id="P10069"/>
    </source>
</evidence>
<evidence type="ECO:0000250" key="2">
    <source>
        <dbReference type="UniProtKB" id="P22022"/>
    </source>
</evidence>
<evidence type="ECO:0000255" key="3">
    <source>
        <dbReference type="PROSITE-ProRule" id="PRU00042"/>
    </source>
</evidence>
<evidence type="ECO:0000256" key="4">
    <source>
        <dbReference type="SAM" id="MobiDB-lite"/>
    </source>
</evidence>
<evidence type="ECO:0000269" key="5">
    <source>
    </source>
</evidence>
<evidence type="ECO:0000269" key="6">
    <source>
    </source>
</evidence>
<evidence type="ECO:0000303" key="7">
    <source>
    </source>
</evidence>
<evidence type="ECO:0000305" key="8"/>
<name>BRLA_ASPOR</name>